<accession>Q97QN5</accession>
<proteinExistence type="inferred from homology"/>
<name>NORM_STRPN</name>
<reference key="1">
    <citation type="journal article" date="2001" name="Science">
        <title>Complete genome sequence of a virulent isolate of Streptococcus pneumoniae.</title>
        <authorList>
            <person name="Tettelin H."/>
            <person name="Nelson K.E."/>
            <person name="Paulsen I.T."/>
            <person name="Eisen J.A."/>
            <person name="Read T.D."/>
            <person name="Peterson S.N."/>
            <person name="Heidelberg J.F."/>
            <person name="DeBoy R.T."/>
            <person name="Haft D.H."/>
            <person name="Dodson R.J."/>
            <person name="Durkin A.S."/>
            <person name="Gwinn M.L."/>
            <person name="Kolonay J.F."/>
            <person name="Nelson W.C."/>
            <person name="Peterson J.D."/>
            <person name="Umayam L.A."/>
            <person name="White O."/>
            <person name="Salzberg S.L."/>
            <person name="Lewis M.R."/>
            <person name="Radune D."/>
            <person name="Holtzapple E.K."/>
            <person name="Khouri H.M."/>
            <person name="Wolf A.M."/>
            <person name="Utterback T.R."/>
            <person name="Hansen C.L."/>
            <person name="McDonald L.A."/>
            <person name="Feldblyum T.V."/>
            <person name="Angiuoli S.V."/>
            <person name="Dickinson T."/>
            <person name="Hickey E.K."/>
            <person name="Holt I.E."/>
            <person name="Loftus B.J."/>
            <person name="Yang F."/>
            <person name="Smith H.O."/>
            <person name="Venter J.C."/>
            <person name="Dougherty B.A."/>
            <person name="Morrison D.A."/>
            <person name="Hollingshead S.K."/>
            <person name="Fraser C.M."/>
        </authorList>
    </citation>
    <scope>NUCLEOTIDE SEQUENCE [LARGE SCALE GENOMIC DNA]</scope>
    <source>
        <strain>ATCC BAA-334 / TIGR4</strain>
    </source>
</reference>
<feature type="chain" id="PRO_0000164239" description="Probable multidrug resistance protein NorM">
    <location>
        <begin position="1"/>
        <end position="453"/>
    </location>
</feature>
<feature type="transmembrane region" description="Helical" evidence="2">
    <location>
        <begin position="12"/>
        <end position="34"/>
    </location>
</feature>
<feature type="transmembrane region" description="Helical" evidence="2">
    <location>
        <begin position="54"/>
        <end position="76"/>
    </location>
</feature>
<feature type="transmembrane region" description="Helical" evidence="2">
    <location>
        <begin position="96"/>
        <end position="118"/>
    </location>
</feature>
<feature type="transmembrane region" description="Helical" evidence="2">
    <location>
        <begin position="128"/>
        <end position="150"/>
    </location>
</feature>
<feature type="transmembrane region" description="Helical" evidence="2">
    <location>
        <begin position="162"/>
        <end position="184"/>
    </location>
</feature>
<feature type="transmembrane region" description="Helical" evidence="2">
    <location>
        <begin position="194"/>
        <end position="216"/>
    </location>
</feature>
<feature type="transmembrane region" description="Helical" evidence="2">
    <location>
        <begin position="243"/>
        <end position="265"/>
    </location>
</feature>
<feature type="transmembrane region" description="Helical" evidence="2">
    <location>
        <begin position="285"/>
        <end position="307"/>
    </location>
</feature>
<feature type="transmembrane region" description="Helical" evidence="2">
    <location>
        <begin position="319"/>
        <end position="338"/>
    </location>
</feature>
<feature type="transmembrane region" description="Helical" evidence="2">
    <location>
        <begin position="358"/>
        <end position="380"/>
    </location>
</feature>
<feature type="transmembrane region" description="Helical" evidence="2">
    <location>
        <begin position="387"/>
        <end position="404"/>
    </location>
</feature>
<feature type="transmembrane region" description="Helical" evidence="2">
    <location>
        <begin position="414"/>
        <end position="436"/>
    </location>
</feature>
<evidence type="ECO:0000250" key="1"/>
<evidence type="ECO:0000255" key="2"/>
<evidence type="ECO:0000305" key="3"/>
<dbReference type="EMBL" id="AE005672">
    <property type="protein sequence ID" value="AAK75275.1"/>
    <property type="molecule type" value="Genomic_DNA"/>
</dbReference>
<dbReference type="PIR" id="B95135">
    <property type="entry name" value="B95135"/>
</dbReference>
<dbReference type="RefSeq" id="WP_000278525.1">
    <property type="nucleotide sequence ID" value="NC_003028.3"/>
</dbReference>
<dbReference type="SMR" id="Q97QN5"/>
<dbReference type="PaxDb" id="170187-SP_1166"/>
<dbReference type="DNASU" id="931680"/>
<dbReference type="EnsemblBacteria" id="AAK75275">
    <property type="protein sequence ID" value="AAK75275"/>
    <property type="gene ID" value="SP_1166"/>
</dbReference>
<dbReference type="KEGG" id="spn:SP_1166"/>
<dbReference type="eggNOG" id="COG0534">
    <property type="taxonomic scope" value="Bacteria"/>
</dbReference>
<dbReference type="PhylomeDB" id="Q97QN5"/>
<dbReference type="BioCyc" id="SPNE170187:G1FZB-1185-MONOMER"/>
<dbReference type="Proteomes" id="UP000000585">
    <property type="component" value="Chromosome"/>
</dbReference>
<dbReference type="GO" id="GO:0005886">
    <property type="term" value="C:plasma membrane"/>
    <property type="evidence" value="ECO:0007669"/>
    <property type="project" value="UniProtKB-SubCell"/>
</dbReference>
<dbReference type="GO" id="GO:0015297">
    <property type="term" value="F:antiporter activity"/>
    <property type="evidence" value="ECO:0007669"/>
    <property type="project" value="UniProtKB-KW"/>
</dbReference>
<dbReference type="GO" id="GO:0042910">
    <property type="term" value="F:xenobiotic transmembrane transporter activity"/>
    <property type="evidence" value="ECO:0007669"/>
    <property type="project" value="InterPro"/>
</dbReference>
<dbReference type="GO" id="GO:0006811">
    <property type="term" value="P:monoatomic ion transport"/>
    <property type="evidence" value="ECO:0007669"/>
    <property type="project" value="UniProtKB-KW"/>
</dbReference>
<dbReference type="CDD" id="cd13131">
    <property type="entry name" value="MATE_NorM_like"/>
    <property type="match status" value="1"/>
</dbReference>
<dbReference type="InterPro" id="IPR002528">
    <property type="entry name" value="MATE_fam"/>
</dbReference>
<dbReference type="InterPro" id="IPR050222">
    <property type="entry name" value="MATE_MdtK"/>
</dbReference>
<dbReference type="InterPro" id="IPR048279">
    <property type="entry name" value="MdtK-like"/>
</dbReference>
<dbReference type="NCBIfam" id="TIGR00797">
    <property type="entry name" value="matE"/>
    <property type="match status" value="1"/>
</dbReference>
<dbReference type="PANTHER" id="PTHR43298:SF2">
    <property type="entry name" value="FMN_FAD EXPORTER YEEO-RELATED"/>
    <property type="match status" value="1"/>
</dbReference>
<dbReference type="PANTHER" id="PTHR43298">
    <property type="entry name" value="MULTIDRUG RESISTANCE PROTEIN NORM-RELATED"/>
    <property type="match status" value="1"/>
</dbReference>
<dbReference type="Pfam" id="PF01554">
    <property type="entry name" value="MatE"/>
    <property type="match status" value="2"/>
</dbReference>
<dbReference type="PIRSF" id="PIRSF006603">
    <property type="entry name" value="DinF"/>
    <property type="match status" value="1"/>
</dbReference>
<sequence length="453" mass="50141">MYKTKCLREKLVLFLKIFFPILIYQFANYSASFVDTAMTGQYNTMDLAGVSMATSIWNPFFTFLTGIVSALVPIIGHHLGRGKKEEVASDFYQFIYLALGLSVVLLGMVLFLAPIILNHIGLEAAVAAVAVRYLWFLSIGIIPLLLFSVIRSLLDSLGLTKLSMYLMLLLLPLNSGFNYLLIYGAFGVPELGGAGAGLGTSLAYWVLLGISVLVLFKQEKLKALHLEKRIPLNMDKIKEGVRLGLPIGGTVFAEVAIFSVVGLIMAKFSPLIIASHQSAMNFSSLMYAFPMSISSAMAIVVSYEVGAKRFDDAKTYIGLGRWTALIFAAFTLTFLYIFRGNVASLYGNDPKFIDLTVRFLTYSLFFQLADTFAAPLQGILRGYKDTVIPFYLGLLGYWGVAIPVRTLFDSLTDFGAYSYWIGLIISLIVSGALYRWRLTVIMKRFESLAKSKC</sequence>
<comment type="function">
    <text evidence="1">Multidrug efflux pump.</text>
</comment>
<comment type="subcellular location">
    <subcellularLocation>
        <location evidence="1">Cell membrane</location>
        <topology evidence="1">Multi-pass membrane protein</topology>
    </subcellularLocation>
</comment>
<comment type="similarity">
    <text evidence="3">Belongs to the multi antimicrobial extrusion (MATE) (TC 2.A.66.1) family.</text>
</comment>
<organism>
    <name type="scientific">Streptococcus pneumoniae serotype 4 (strain ATCC BAA-334 / TIGR4)</name>
    <dbReference type="NCBI Taxonomy" id="170187"/>
    <lineage>
        <taxon>Bacteria</taxon>
        <taxon>Bacillati</taxon>
        <taxon>Bacillota</taxon>
        <taxon>Bacilli</taxon>
        <taxon>Lactobacillales</taxon>
        <taxon>Streptococcaceae</taxon>
        <taxon>Streptococcus</taxon>
    </lineage>
</organism>
<gene>
    <name type="primary">norM</name>
    <name type="ordered locus">SP_1166</name>
</gene>
<protein>
    <recommendedName>
        <fullName>Probable multidrug resistance protein NorM</fullName>
    </recommendedName>
    <alternativeName>
        <fullName>Multidrug-efflux transporter</fullName>
    </alternativeName>
</protein>
<keyword id="KW-0050">Antiport</keyword>
<keyword id="KW-1003">Cell membrane</keyword>
<keyword id="KW-0406">Ion transport</keyword>
<keyword id="KW-0472">Membrane</keyword>
<keyword id="KW-1185">Reference proteome</keyword>
<keyword id="KW-0812">Transmembrane</keyword>
<keyword id="KW-1133">Transmembrane helix</keyword>
<keyword id="KW-0813">Transport</keyword>